<dbReference type="EC" id="6.1.1.17" evidence="1"/>
<dbReference type="EMBL" id="AJ235271">
    <property type="protein sequence ID" value="CAA14785.1"/>
    <property type="molecule type" value="Genomic_DNA"/>
</dbReference>
<dbReference type="PIR" id="G71688">
    <property type="entry name" value="G71688"/>
</dbReference>
<dbReference type="RefSeq" id="NP_220708.1">
    <property type="nucleotide sequence ID" value="NC_000963.1"/>
</dbReference>
<dbReference type="SMR" id="Q9ZDK3"/>
<dbReference type="STRING" id="272947.gene:17555405"/>
<dbReference type="EnsemblBacteria" id="CAA14785">
    <property type="protein sequence ID" value="CAA14785"/>
    <property type="gene ID" value="CAA14785"/>
</dbReference>
<dbReference type="KEGG" id="rpr:RP325"/>
<dbReference type="PATRIC" id="fig|272947.5.peg.335"/>
<dbReference type="eggNOG" id="COG0008">
    <property type="taxonomic scope" value="Bacteria"/>
</dbReference>
<dbReference type="HOGENOM" id="CLU_015768_6_1_5"/>
<dbReference type="OrthoDB" id="9807503at2"/>
<dbReference type="Proteomes" id="UP000002480">
    <property type="component" value="Chromosome"/>
</dbReference>
<dbReference type="GO" id="GO:0005737">
    <property type="term" value="C:cytoplasm"/>
    <property type="evidence" value="ECO:0007669"/>
    <property type="project" value="UniProtKB-SubCell"/>
</dbReference>
<dbReference type="GO" id="GO:0005524">
    <property type="term" value="F:ATP binding"/>
    <property type="evidence" value="ECO:0007669"/>
    <property type="project" value="UniProtKB-UniRule"/>
</dbReference>
<dbReference type="GO" id="GO:0004818">
    <property type="term" value="F:glutamate-tRNA ligase activity"/>
    <property type="evidence" value="ECO:0007669"/>
    <property type="project" value="UniProtKB-UniRule"/>
</dbReference>
<dbReference type="GO" id="GO:0000049">
    <property type="term" value="F:tRNA binding"/>
    <property type="evidence" value="ECO:0007669"/>
    <property type="project" value="InterPro"/>
</dbReference>
<dbReference type="GO" id="GO:0006424">
    <property type="term" value="P:glutamyl-tRNA aminoacylation"/>
    <property type="evidence" value="ECO:0007669"/>
    <property type="project" value="UniProtKB-UniRule"/>
</dbReference>
<dbReference type="Gene3D" id="1.10.10.350">
    <property type="match status" value="1"/>
</dbReference>
<dbReference type="Gene3D" id="3.40.50.620">
    <property type="entry name" value="HUPs"/>
    <property type="match status" value="1"/>
</dbReference>
<dbReference type="HAMAP" id="MF_00022">
    <property type="entry name" value="Glu_tRNA_synth_type1"/>
    <property type="match status" value="1"/>
</dbReference>
<dbReference type="InterPro" id="IPR045462">
    <property type="entry name" value="aa-tRNA-synth_I_cd-bd"/>
</dbReference>
<dbReference type="InterPro" id="IPR020751">
    <property type="entry name" value="aa-tRNA-synth_I_codon-bd_sub2"/>
</dbReference>
<dbReference type="InterPro" id="IPR001412">
    <property type="entry name" value="aa-tRNA-synth_I_CS"/>
</dbReference>
<dbReference type="InterPro" id="IPR008925">
    <property type="entry name" value="aa_tRNA-synth_I_cd-bd_sf"/>
</dbReference>
<dbReference type="InterPro" id="IPR004527">
    <property type="entry name" value="Glu-tRNA-ligase_bac/mito"/>
</dbReference>
<dbReference type="InterPro" id="IPR000924">
    <property type="entry name" value="Glu/Gln-tRNA-synth"/>
</dbReference>
<dbReference type="InterPro" id="IPR020058">
    <property type="entry name" value="Glu/Gln-tRNA-synth_Ib_cat-dom"/>
</dbReference>
<dbReference type="InterPro" id="IPR049940">
    <property type="entry name" value="GluQ/Sye"/>
</dbReference>
<dbReference type="InterPro" id="IPR014729">
    <property type="entry name" value="Rossmann-like_a/b/a_fold"/>
</dbReference>
<dbReference type="NCBIfam" id="TIGR00464">
    <property type="entry name" value="gltX_bact"/>
    <property type="match status" value="1"/>
</dbReference>
<dbReference type="PANTHER" id="PTHR43311">
    <property type="entry name" value="GLUTAMATE--TRNA LIGASE"/>
    <property type="match status" value="1"/>
</dbReference>
<dbReference type="PANTHER" id="PTHR43311:SF2">
    <property type="entry name" value="GLUTAMATE--TRNA LIGASE, MITOCHONDRIAL-RELATED"/>
    <property type="match status" value="1"/>
</dbReference>
<dbReference type="Pfam" id="PF19269">
    <property type="entry name" value="Anticodon_2"/>
    <property type="match status" value="1"/>
</dbReference>
<dbReference type="Pfam" id="PF00749">
    <property type="entry name" value="tRNA-synt_1c"/>
    <property type="match status" value="1"/>
</dbReference>
<dbReference type="PRINTS" id="PR00987">
    <property type="entry name" value="TRNASYNTHGLU"/>
</dbReference>
<dbReference type="SUPFAM" id="SSF48163">
    <property type="entry name" value="An anticodon-binding domain of class I aminoacyl-tRNA synthetases"/>
    <property type="match status" value="1"/>
</dbReference>
<dbReference type="SUPFAM" id="SSF52374">
    <property type="entry name" value="Nucleotidylyl transferase"/>
    <property type="match status" value="1"/>
</dbReference>
<dbReference type="PROSITE" id="PS00178">
    <property type="entry name" value="AA_TRNA_LIGASE_I"/>
    <property type="match status" value="1"/>
</dbReference>
<keyword id="KW-0030">Aminoacyl-tRNA synthetase</keyword>
<keyword id="KW-0067">ATP-binding</keyword>
<keyword id="KW-0963">Cytoplasm</keyword>
<keyword id="KW-0436">Ligase</keyword>
<keyword id="KW-0547">Nucleotide-binding</keyword>
<keyword id="KW-0648">Protein biosynthesis</keyword>
<keyword id="KW-1185">Reference proteome</keyword>
<sequence>MTKVITRFAPSPTGMLHVGNIRVALLNWLYAKKHNGKFILRFDDTDLERSKQKYKNDIERDLKFLNINWDQTFNQLSRVSRYHEIKNLLINKKRLYACYETKEELELKRKLQLSKGLPPIYDRASLNLTEKQIQKYIEQGRKPHYRFFLSYEPISWFDMIKGEIKYDGKTLSDPIVIRADGSMTYMLCSVIDDIDYDITHIIRGEDHVSNTAIQIQMFEALNKIPPVFAHLSLIINKEEKISKRVGGFEIAYLKKEVGLEAMTIASFFSLLGSSLHIFPYKSIEKLVAQFEISSFSKSPTIYQQYDLERLNHKLLISLDFNEVKERLKEIDADYIDENFWLSVRPNLQKLSDIKDWWDICYQTPKIKNLNLDKEYLKQASKLLPLKITKDSWSIWTKEITNITGRKGKELFLPLRLALTGRESGPEIAGILPLIDREEIIRRLISIA</sequence>
<feature type="chain" id="PRO_0000119640" description="Glutamate--tRNA ligase 1">
    <location>
        <begin position="1"/>
        <end position="447"/>
    </location>
</feature>
<feature type="short sequence motif" description="'HIGH' region" evidence="1">
    <location>
        <begin position="10"/>
        <end position="20"/>
    </location>
</feature>
<feature type="short sequence motif" description="'KMSKS' region" evidence="1">
    <location>
        <begin position="240"/>
        <end position="244"/>
    </location>
</feature>
<feature type="binding site" evidence="1">
    <location>
        <position position="243"/>
    </location>
    <ligand>
        <name>ATP</name>
        <dbReference type="ChEBI" id="CHEBI:30616"/>
    </ligand>
</feature>
<gene>
    <name evidence="1" type="primary">gltX1</name>
    <name type="ordered locus">RP325</name>
</gene>
<proteinExistence type="inferred from homology"/>
<organism>
    <name type="scientific">Rickettsia prowazekii (strain Madrid E)</name>
    <dbReference type="NCBI Taxonomy" id="272947"/>
    <lineage>
        <taxon>Bacteria</taxon>
        <taxon>Pseudomonadati</taxon>
        <taxon>Pseudomonadota</taxon>
        <taxon>Alphaproteobacteria</taxon>
        <taxon>Rickettsiales</taxon>
        <taxon>Rickettsiaceae</taxon>
        <taxon>Rickettsieae</taxon>
        <taxon>Rickettsia</taxon>
        <taxon>typhus group</taxon>
    </lineage>
</organism>
<comment type="function">
    <text evidence="1">Catalyzes the attachment of glutamate to tRNA(Glu) in a two-step reaction: glutamate is first activated by ATP to form Glu-AMP and then transferred to the acceptor end of tRNA(Glu).</text>
</comment>
<comment type="catalytic activity">
    <reaction evidence="1">
        <text>tRNA(Glu) + L-glutamate + ATP = L-glutamyl-tRNA(Glu) + AMP + diphosphate</text>
        <dbReference type="Rhea" id="RHEA:23540"/>
        <dbReference type="Rhea" id="RHEA-COMP:9663"/>
        <dbReference type="Rhea" id="RHEA-COMP:9680"/>
        <dbReference type="ChEBI" id="CHEBI:29985"/>
        <dbReference type="ChEBI" id="CHEBI:30616"/>
        <dbReference type="ChEBI" id="CHEBI:33019"/>
        <dbReference type="ChEBI" id="CHEBI:78442"/>
        <dbReference type="ChEBI" id="CHEBI:78520"/>
        <dbReference type="ChEBI" id="CHEBI:456215"/>
        <dbReference type="EC" id="6.1.1.17"/>
    </reaction>
</comment>
<comment type="subunit">
    <text evidence="1">Monomer.</text>
</comment>
<comment type="subcellular location">
    <subcellularLocation>
        <location evidence="1">Cytoplasm</location>
    </subcellularLocation>
</comment>
<comment type="similarity">
    <text evidence="1">Belongs to the class-I aminoacyl-tRNA synthetase family. Glutamate--tRNA ligase type 1 subfamily.</text>
</comment>
<reference key="1">
    <citation type="journal article" date="1998" name="Nature">
        <title>The genome sequence of Rickettsia prowazekii and the origin of mitochondria.</title>
        <authorList>
            <person name="Andersson S.G.E."/>
            <person name="Zomorodipour A."/>
            <person name="Andersson J.O."/>
            <person name="Sicheritz-Ponten T."/>
            <person name="Alsmark U.C.M."/>
            <person name="Podowski R.M."/>
            <person name="Naeslund A.K."/>
            <person name="Eriksson A.-S."/>
            <person name="Winkler H.H."/>
            <person name="Kurland C.G."/>
        </authorList>
    </citation>
    <scope>NUCLEOTIDE SEQUENCE [LARGE SCALE GENOMIC DNA]</scope>
    <source>
        <strain>Madrid E</strain>
    </source>
</reference>
<name>SYE1_RICPR</name>
<accession>Q9ZDK3</accession>
<evidence type="ECO:0000255" key="1">
    <source>
        <dbReference type="HAMAP-Rule" id="MF_00022"/>
    </source>
</evidence>
<protein>
    <recommendedName>
        <fullName evidence="1">Glutamate--tRNA ligase 1</fullName>
        <ecNumber evidence="1">6.1.1.17</ecNumber>
    </recommendedName>
    <alternativeName>
        <fullName evidence="1">Glutamyl-tRNA synthetase 1</fullName>
        <shortName evidence="1">GluRS 1</shortName>
    </alternativeName>
</protein>